<protein>
    <recommendedName>
        <fullName evidence="1">Large ribosomal subunit protein uL5</fullName>
    </recommendedName>
    <alternativeName>
        <fullName evidence="2">50S ribosomal protein L5</fullName>
    </alternativeName>
</protein>
<proteinExistence type="inferred from homology"/>
<keyword id="KW-0687">Ribonucleoprotein</keyword>
<keyword id="KW-0689">Ribosomal protein</keyword>
<keyword id="KW-0694">RNA-binding</keyword>
<keyword id="KW-0699">rRNA-binding</keyword>
<keyword id="KW-0820">tRNA-binding</keyword>
<reference key="1">
    <citation type="journal article" date="2004" name="Nucleic Acids Res.">
        <title>The genome sequence of Bacillus cereus ATCC 10987 reveals metabolic adaptations and a large plasmid related to Bacillus anthracis pXO1.</title>
        <authorList>
            <person name="Rasko D.A."/>
            <person name="Ravel J."/>
            <person name="Oekstad O.A."/>
            <person name="Helgason E."/>
            <person name="Cer R.Z."/>
            <person name="Jiang L."/>
            <person name="Shores K.A."/>
            <person name="Fouts D.E."/>
            <person name="Tourasse N.J."/>
            <person name="Angiuoli S.V."/>
            <person name="Kolonay J.F."/>
            <person name="Nelson W.C."/>
            <person name="Kolstoe A.-B."/>
            <person name="Fraser C.M."/>
            <person name="Read T.D."/>
        </authorList>
    </citation>
    <scope>NUCLEOTIDE SEQUENCE [LARGE SCALE GENOMIC DNA]</scope>
    <source>
        <strain>ATCC 10987 / NRS 248</strain>
    </source>
</reference>
<comment type="function">
    <text evidence="1">This is one of the proteins that bind and probably mediate the attachment of the 5S RNA into the large ribosomal subunit, where it forms part of the central protuberance. In the 70S ribosome it contacts protein S13 of the 30S subunit (bridge B1b), connecting the 2 subunits; this bridge is implicated in subunit movement. Contacts the P site tRNA; the 5S rRNA and some of its associated proteins might help stabilize positioning of ribosome-bound tRNAs.</text>
</comment>
<comment type="subunit">
    <text evidence="1">Part of the 50S ribosomal subunit; part of the 5S rRNA/L5/L18/L25 subcomplex. Contacts the 5S rRNA and the P site tRNA. Forms a bridge to the 30S subunit in the 70S ribosome.</text>
</comment>
<comment type="similarity">
    <text evidence="1">Belongs to the universal ribosomal protein uL5 family.</text>
</comment>
<gene>
    <name evidence="1" type="primary">rplE</name>
    <name type="ordered locus">BCE_0122</name>
</gene>
<accession>Q73F84</accession>
<dbReference type="EMBL" id="AE017194">
    <property type="protein sequence ID" value="AAS39058.1"/>
    <property type="molecule type" value="Genomic_DNA"/>
</dbReference>
<dbReference type="SMR" id="Q73F84"/>
<dbReference type="KEGG" id="bca:BCE_0122"/>
<dbReference type="HOGENOM" id="CLU_061015_2_1_9"/>
<dbReference type="Proteomes" id="UP000002527">
    <property type="component" value="Chromosome"/>
</dbReference>
<dbReference type="GO" id="GO:1990904">
    <property type="term" value="C:ribonucleoprotein complex"/>
    <property type="evidence" value="ECO:0007669"/>
    <property type="project" value="UniProtKB-KW"/>
</dbReference>
<dbReference type="GO" id="GO:0005840">
    <property type="term" value="C:ribosome"/>
    <property type="evidence" value="ECO:0007669"/>
    <property type="project" value="UniProtKB-KW"/>
</dbReference>
<dbReference type="GO" id="GO:0019843">
    <property type="term" value="F:rRNA binding"/>
    <property type="evidence" value="ECO:0007669"/>
    <property type="project" value="UniProtKB-UniRule"/>
</dbReference>
<dbReference type="GO" id="GO:0003735">
    <property type="term" value="F:structural constituent of ribosome"/>
    <property type="evidence" value="ECO:0007669"/>
    <property type="project" value="InterPro"/>
</dbReference>
<dbReference type="GO" id="GO:0000049">
    <property type="term" value="F:tRNA binding"/>
    <property type="evidence" value="ECO:0007669"/>
    <property type="project" value="UniProtKB-UniRule"/>
</dbReference>
<dbReference type="GO" id="GO:0006412">
    <property type="term" value="P:translation"/>
    <property type="evidence" value="ECO:0007669"/>
    <property type="project" value="UniProtKB-UniRule"/>
</dbReference>
<dbReference type="FunFam" id="3.30.1440.10:FF:000001">
    <property type="entry name" value="50S ribosomal protein L5"/>
    <property type="match status" value="1"/>
</dbReference>
<dbReference type="Gene3D" id="3.30.1440.10">
    <property type="match status" value="1"/>
</dbReference>
<dbReference type="HAMAP" id="MF_01333_B">
    <property type="entry name" value="Ribosomal_uL5_B"/>
    <property type="match status" value="1"/>
</dbReference>
<dbReference type="InterPro" id="IPR002132">
    <property type="entry name" value="Ribosomal_uL5"/>
</dbReference>
<dbReference type="InterPro" id="IPR020930">
    <property type="entry name" value="Ribosomal_uL5_bac-type"/>
</dbReference>
<dbReference type="InterPro" id="IPR031309">
    <property type="entry name" value="Ribosomal_uL5_C"/>
</dbReference>
<dbReference type="InterPro" id="IPR020929">
    <property type="entry name" value="Ribosomal_uL5_CS"/>
</dbReference>
<dbReference type="InterPro" id="IPR022803">
    <property type="entry name" value="Ribosomal_uL5_dom_sf"/>
</dbReference>
<dbReference type="InterPro" id="IPR031310">
    <property type="entry name" value="Ribosomal_uL5_N"/>
</dbReference>
<dbReference type="NCBIfam" id="NF000585">
    <property type="entry name" value="PRK00010.1"/>
    <property type="match status" value="1"/>
</dbReference>
<dbReference type="PANTHER" id="PTHR11994">
    <property type="entry name" value="60S RIBOSOMAL PROTEIN L11-RELATED"/>
    <property type="match status" value="1"/>
</dbReference>
<dbReference type="Pfam" id="PF00281">
    <property type="entry name" value="Ribosomal_L5"/>
    <property type="match status" value="1"/>
</dbReference>
<dbReference type="Pfam" id="PF00673">
    <property type="entry name" value="Ribosomal_L5_C"/>
    <property type="match status" value="1"/>
</dbReference>
<dbReference type="PIRSF" id="PIRSF002161">
    <property type="entry name" value="Ribosomal_L5"/>
    <property type="match status" value="1"/>
</dbReference>
<dbReference type="SUPFAM" id="SSF55282">
    <property type="entry name" value="RL5-like"/>
    <property type="match status" value="1"/>
</dbReference>
<dbReference type="PROSITE" id="PS00358">
    <property type="entry name" value="RIBOSOMAL_L5"/>
    <property type="match status" value="1"/>
</dbReference>
<sequence length="179" mass="20153">MNRLKEKFQKEITPALMSKFNYKSVMQVPKIEKIVINTGVGDAVSNSKALDNAVEELTQIAGQKPVVTRAKKSIAGFRLREGMPIGAKVTLRGEQMYEFFDKLVSVSLPRVRDFRGVSKKSFDGRGNYTLGVKEQLIFPEIDYDKVSKVRGMDIVIVTTANTDEEARELLTQFGMPFQK</sequence>
<organism>
    <name type="scientific">Bacillus cereus (strain ATCC 10987 / NRS 248)</name>
    <dbReference type="NCBI Taxonomy" id="222523"/>
    <lineage>
        <taxon>Bacteria</taxon>
        <taxon>Bacillati</taxon>
        <taxon>Bacillota</taxon>
        <taxon>Bacilli</taxon>
        <taxon>Bacillales</taxon>
        <taxon>Bacillaceae</taxon>
        <taxon>Bacillus</taxon>
        <taxon>Bacillus cereus group</taxon>
    </lineage>
</organism>
<feature type="chain" id="PRO_0000124888" description="Large ribosomal subunit protein uL5">
    <location>
        <begin position="1"/>
        <end position="179"/>
    </location>
</feature>
<evidence type="ECO:0000255" key="1">
    <source>
        <dbReference type="HAMAP-Rule" id="MF_01333"/>
    </source>
</evidence>
<evidence type="ECO:0000305" key="2"/>
<name>RL5_BACC1</name>